<name>RS17_BURCM</name>
<accession>Q0BJ37</accession>
<reference key="1">
    <citation type="submission" date="2006-08" db="EMBL/GenBank/DDBJ databases">
        <title>Complete sequence of chromosome 1 of Burkholderia cepacia AMMD.</title>
        <authorList>
            <person name="Copeland A."/>
            <person name="Lucas S."/>
            <person name="Lapidus A."/>
            <person name="Barry K."/>
            <person name="Detter J.C."/>
            <person name="Glavina del Rio T."/>
            <person name="Hammon N."/>
            <person name="Israni S."/>
            <person name="Pitluck S."/>
            <person name="Bruce D."/>
            <person name="Chain P."/>
            <person name="Malfatti S."/>
            <person name="Shin M."/>
            <person name="Vergez L."/>
            <person name="Schmutz J."/>
            <person name="Larimer F."/>
            <person name="Land M."/>
            <person name="Hauser L."/>
            <person name="Kyrpides N."/>
            <person name="Kim E."/>
            <person name="Parke J."/>
            <person name="Coenye T."/>
            <person name="Konstantinidis K."/>
            <person name="Ramette A."/>
            <person name="Tiedje J."/>
            <person name="Richardson P."/>
        </authorList>
    </citation>
    <scope>NUCLEOTIDE SEQUENCE [LARGE SCALE GENOMIC DNA]</scope>
    <source>
        <strain>ATCC BAA-244 / DSM 16087 / CCUG 44356 / LMG 19182 / AMMD</strain>
    </source>
</reference>
<keyword id="KW-0687">Ribonucleoprotein</keyword>
<keyword id="KW-0689">Ribosomal protein</keyword>
<keyword id="KW-0694">RNA-binding</keyword>
<keyword id="KW-0699">rRNA-binding</keyword>
<proteinExistence type="inferred from homology"/>
<evidence type="ECO:0000255" key="1">
    <source>
        <dbReference type="HAMAP-Rule" id="MF_01345"/>
    </source>
</evidence>
<evidence type="ECO:0000305" key="2"/>
<organism>
    <name type="scientific">Burkholderia ambifaria (strain ATCC BAA-244 / DSM 16087 / CCUG 44356 / LMG 19182 / AMMD)</name>
    <name type="common">Burkholderia cepacia (strain AMMD)</name>
    <dbReference type="NCBI Taxonomy" id="339670"/>
    <lineage>
        <taxon>Bacteria</taxon>
        <taxon>Pseudomonadati</taxon>
        <taxon>Pseudomonadota</taxon>
        <taxon>Betaproteobacteria</taxon>
        <taxon>Burkholderiales</taxon>
        <taxon>Burkholderiaceae</taxon>
        <taxon>Burkholderia</taxon>
        <taxon>Burkholderia cepacia complex</taxon>
    </lineage>
</organism>
<gene>
    <name evidence="1" type="primary">rpsQ</name>
    <name type="ordered locus">Bamb_0276</name>
</gene>
<sequence>MNDSVKTSLKRTLVGRVVSNKMDKTVTVLIEHRVKHPIYGKYVVRSKKYHAHDEANTCNEGDLVEIQETRPVSKTKAWTVSRLVEAARVI</sequence>
<comment type="function">
    <text evidence="1">One of the primary rRNA binding proteins, it binds specifically to the 5'-end of 16S ribosomal RNA.</text>
</comment>
<comment type="subunit">
    <text evidence="1">Part of the 30S ribosomal subunit.</text>
</comment>
<comment type="similarity">
    <text evidence="1">Belongs to the universal ribosomal protein uS17 family.</text>
</comment>
<dbReference type="EMBL" id="CP000440">
    <property type="protein sequence ID" value="ABI85836.1"/>
    <property type="molecule type" value="Genomic_DNA"/>
</dbReference>
<dbReference type="RefSeq" id="WP_006752928.1">
    <property type="nucleotide sequence ID" value="NZ_CP009798.1"/>
</dbReference>
<dbReference type="SMR" id="Q0BJ37"/>
<dbReference type="GeneID" id="98107151"/>
<dbReference type="KEGG" id="bam:Bamb_0276"/>
<dbReference type="PATRIC" id="fig|339670.21.peg.1344"/>
<dbReference type="eggNOG" id="COG0186">
    <property type="taxonomic scope" value="Bacteria"/>
</dbReference>
<dbReference type="Proteomes" id="UP000000662">
    <property type="component" value="Chromosome 1"/>
</dbReference>
<dbReference type="GO" id="GO:0022627">
    <property type="term" value="C:cytosolic small ribosomal subunit"/>
    <property type="evidence" value="ECO:0007669"/>
    <property type="project" value="TreeGrafter"/>
</dbReference>
<dbReference type="GO" id="GO:0019843">
    <property type="term" value="F:rRNA binding"/>
    <property type="evidence" value="ECO:0007669"/>
    <property type="project" value="UniProtKB-UniRule"/>
</dbReference>
<dbReference type="GO" id="GO:0003735">
    <property type="term" value="F:structural constituent of ribosome"/>
    <property type="evidence" value="ECO:0007669"/>
    <property type="project" value="InterPro"/>
</dbReference>
<dbReference type="GO" id="GO:0006412">
    <property type="term" value="P:translation"/>
    <property type="evidence" value="ECO:0007669"/>
    <property type="project" value="UniProtKB-UniRule"/>
</dbReference>
<dbReference type="CDD" id="cd00364">
    <property type="entry name" value="Ribosomal_uS17"/>
    <property type="match status" value="1"/>
</dbReference>
<dbReference type="Gene3D" id="2.40.50.140">
    <property type="entry name" value="Nucleic acid-binding proteins"/>
    <property type="match status" value="1"/>
</dbReference>
<dbReference type="HAMAP" id="MF_01345_B">
    <property type="entry name" value="Ribosomal_uS17_B"/>
    <property type="match status" value="1"/>
</dbReference>
<dbReference type="InterPro" id="IPR012340">
    <property type="entry name" value="NA-bd_OB-fold"/>
</dbReference>
<dbReference type="InterPro" id="IPR000266">
    <property type="entry name" value="Ribosomal_uS17"/>
</dbReference>
<dbReference type="InterPro" id="IPR019984">
    <property type="entry name" value="Ribosomal_uS17_bact/chlr"/>
</dbReference>
<dbReference type="InterPro" id="IPR019979">
    <property type="entry name" value="Ribosomal_uS17_CS"/>
</dbReference>
<dbReference type="NCBIfam" id="NF004123">
    <property type="entry name" value="PRK05610.1"/>
    <property type="match status" value="1"/>
</dbReference>
<dbReference type="NCBIfam" id="TIGR03635">
    <property type="entry name" value="uS17_bact"/>
    <property type="match status" value="1"/>
</dbReference>
<dbReference type="PANTHER" id="PTHR10744">
    <property type="entry name" value="40S RIBOSOMAL PROTEIN S11 FAMILY MEMBER"/>
    <property type="match status" value="1"/>
</dbReference>
<dbReference type="PANTHER" id="PTHR10744:SF1">
    <property type="entry name" value="SMALL RIBOSOMAL SUBUNIT PROTEIN US17M"/>
    <property type="match status" value="1"/>
</dbReference>
<dbReference type="Pfam" id="PF00366">
    <property type="entry name" value="Ribosomal_S17"/>
    <property type="match status" value="1"/>
</dbReference>
<dbReference type="PRINTS" id="PR00973">
    <property type="entry name" value="RIBOSOMALS17"/>
</dbReference>
<dbReference type="SUPFAM" id="SSF50249">
    <property type="entry name" value="Nucleic acid-binding proteins"/>
    <property type="match status" value="1"/>
</dbReference>
<dbReference type="PROSITE" id="PS00056">
    <property type="entry name" value="RIBOSOMAL_S17"/>
    <property type="match status" value="1"/>
</dbReference>
<feature type="chain" id="PRO_1000054924" description="Small ribosomal subunit protein uS17">
    <location>
        <begin position="1"/>
        <end position="90"/>
    </location>
</feature>
<protein>
    <recommendedName>
        <fullName evidence="1">Small ribosomal subunit protein uS17</fullName>
    </recommendedName>
    <alternativeName>
        <fullName evidence="2">30S ribosomal protein S17</fullName>
    </alternativeName>
</protein>